<name>RL17_STRZP</name>
<evidence type="ECO:0000255" key="1">
    <source>
        <dbReference type="HAMAP-Rule" id="MF_01368"/>
    </source>
</evidence>
<evidence type="ECO:0000305" key="2"/>
<keyword id="KW-0687">Ribonucleoprotein</keyword>
<keyword id="KW-0689">Ribosomal protein</keyword>
<reference key="1">
    <citation type="journal article" date="2010" name="Genome Biol.">
        <title>Structure and dynamics of the pan-genome of Streptococcus pneumoniae and closely related species.</title>
        <authorList>
            <person name="Donati C."/>
            <person name="Hiller N.L."/>
            <person name="Tettelin H."/>
            <person name="Muzzi A."/>
            <person name="Croucher N.J."/>
            <person name="Angiuoli S.V."/>
            <person name="Oggioni M."/>
            <person name="Dunning Hotopp J.C."/>
            <person name="Hu F.Z."/>
            <person name="Riley D.R."/>
            <person name="Covacci A."/>
            <person name="Mitchell T.J."/>
            <person name="Bentley S.D."/>
            <person name="Kilian M."/>
            <person name="Ehrlich G.D."/>
            <person name="Rappuoli R."/>
            <person name="Moxon E.R."/>
            <person name="Masignani V."/>
        </authorList>
    </citation>
    <scope>NUCLEOTIDE SEQUENCE [LARGE SCALE GENOMIC DNA]</scope>
    <source>
        <strain>P1031</strain>
    </source>
</reference>
<organism>
    <name type="scientific">Streptococcus pneumoniae (strain P1031)</name>
    <dbReference type="NCBI Taxonomy" id="488223"/>
    <lineage>
        <taxon>Bacteria</taxon>
        <taxon>Bacillati</taxon>
        <taxon>Bacillota</taxon>
        <taxon>Bacilli</taxon>
        <taxon>Lactobacillales</taxon>
        <taxon>Streptococcaceae</taxon>
        <taxon>Streptococcus</taxon>
    </lineage>
</organism>
<comment type="subunit">
    <text evidence="1">Part of the 50S ribosomal subunit. Contacts protein L32.</text>
</comment>
<comment type="similarity">
    <text evidence="1">Belongs to the bacterial ribosomal protein bL17 family.</text>
</comment>
<accession>C1CIC4</accession>
<gene>
    <name evidence="1" type="primary">rplQ</name>
    <name type="ordered locus">SPP_0287</name>
</gene>
<proteinExistence type="inferred from homology"/>
<dbReference type="EMBL" id="CP000920">
    <property type="protein sequence ID" value="ACO20804.1"/>
    <property type="molecule type" value="Genomic_DNA"/>
</dbReference>
<dbReference type="RefSeq" id="WP_000331493.1">
    <property type="nucleotide sequence ID" value="NC_012467.1"/>
</dbReference>
<dbReference type="SMR" id="C1CIC4"/>
<dbReference type="GeneID" id="93738984"/>
<dbReference type="KEGG" id="spp:SPP_0287"/>
<dbReference type="HOGENOM" id="CLU_074407_2_2_9"/>
<dbReference type="GO" id="GO:0022625">
    <property type="term" value="C:cytosolic large ribosomal subunit"/>
    <property type="evidence" value="ECO:0007669"/>
    <property type="project" value="TreeGrafter"/>
</dbReference>
<dbReference type="GO" id="GO:0003735">
    <property type="term" value="F:structural constituent of ribosome"/>
    <property type="evidence" value="ECO:0007669"/>
    <property type="project" value="InterPro"/>
</dbReference>
<dbReference type="GO" id="GO:0006412">
    <property type="term" value="P:translation"/>
    <property type="evidence" value="ECO:0007669"/>
    <property type="project" value="UniProtKB-UniRule"/>
</dbReference>
<dbReference type="FunFam" id="3.90.1030.10:FF:000002">
    <property type="entry name" value="50S ribosomal protein L17"/>
    <property type="match status" value="1"/>
</dbReference>
<dbReference type="Gene3D" id="3.90.1030.10">
    <property type="entry name" value="Ribosomal protein L17"/>
    <property type="match status" value="1"/>
</dbReference>
<dbReference type="HAMAP" id="MF_01368">
    <property type="entry name" value="Ribosomal_bL17"/>
    <property type="match status" value="1"/>
</dbReference>
<dbReference type="InterPro" id="IPR000456">
    <property type="entry name" value="Ribosomal_bL17"/>
</dbReference>
<dbReference type="InterPro" id="IPR047859">
    <property type="entry name" value="Ribosomal_bL17_CS"/>
</dbReference>
<dbReference type="InterPro" id="IPR036373">
    <property type="entry name" value="Ribosomal_bL17_sf"/>
</dbReference>
<dbReference type="NCBIfam" id="TIGR00059">
    <property type="entry name" value="L17"/>
    <property type="match status" value="1"/>
</dbReference>
<dbReference type="PANTHER" id="PTHR14413:SF16">
    <property type="entry name" value="LARGE RIBOSOMAL SUBUNIT PROTEIN BL17M"/>
    <property type="match status" value="1"/>
</dbReference>
<dbReference type="PANTHER" id="PTHR14413">
    <property type="entry name" value="RIBOSOMAL PROTEIN L17"/>
    <property type="match status" value="1"/>
</dbReference>
<dbReference type="Pfam" id="PF01196">
    <property type="entry name" value="Ribosomal_L17"/>
    <property type="match status" value="1"/>
</dbReference>
<dbReference type="SUPFAM" id="SSF64263">
    <property type="entry name" value="Prokaryotic ribosomal protein L17"/>
    <property type="match status" value="1"/>
</dbReference>
<dbReference type="PROSITE" id="PS01167">
    <property type="entry name" value="RIBOSOMAL_L17"/>
    <property type="match status" value="1"/>
</dbReference>
<protein>
    <recommendedName>
        <fullName evidence="1">Large ribosomal subunit protein bL17</fullName>
    </recommendedName>
    <alternativeName>
        <fullName evidence="2">50S ribosomal protein L17</fullName>
    </alternativeName>
</protein>
<feature type="chain" id="PRO_1000184049" description="Large ribosomal subunit protein bL17">
    <location>
        <begin position="1"/>
        <end position="128"/>
    </location>
</feature>
<sequence length="128" mass="14506">MAYRKLGRTSSQRKAMLRDLTTDLLINESIVTTEARAKEIRKTVEKMITLGKRGDLHARRQAAAFVRNEIASENYDEATDKYTSTTALQKLFSEIAPRYAERNGGYTRILKTEPRRGDAAPMAIIELV</sequence>